<sequence length="303" mass="34310">MEHIFLELRSPGPDLFQLGPFSLRWYGLLIAISVLVGLNLSSELASKKGLKKSLINDLLPILVLASVIGARIYYVAFEWRNYTGKNFWSSINFLNLNIPLPSALEIWGGGIAIHGALIMGTLSIIFFCRWRKEPFWDVIDVLVPSVALGQAIGRWGNFFNNEAFGIPTNLPWKLFIPYRFRPEIFSTQDYFHPTFLYESVWNIFVFGILIFLFRKSNKKELKLPPGSLSCLYLITYSLGRFWIEGLRTDPLCLGGVPPFCEGGLRIAQLISLFLISAGLLGIWRIYVSKKALPDPSSINGRNQ</sequence>
<proteinExistence type="inferred from homology"/>
<dbReference type="EC" id="2.5.1.145" evidence="1"/>
<dbReference type="EMBL" id="CP000553">
    <property type="protein sequence ID" value="ABM75077.1"/>
    <property type="molecule type" value="Genomic_DNA"/>
</dbReference>
<dbReference type="RefSeq" id="WP_011823260.1">
    <property type="nucleotide sequence ID" value="NC_008819.1"/>
</dbReference>
<dbReference type="SMR" id="A2C0R7"/>
<dbReference type="KEGG" id="pme:NATL1_05151"/>
<dbReference type="eggNOG" id="COG0682">
    <property type="taxonomic scope" value="Bacteria"/>
</dbReference>
<dbReference type="HOGENOM" id="CLU_013386_1_2_3"/>
<dbReference type="UniPathway" id="UPA00664"/>
<dbReference type="Proteomes" id="UP000002592">
    <property type="component" value="Chromosome"/>
</dbReference>
<dbReference type="GO" id="GO:0005886">
    <property type="term" value="C:plasma membrane"/>
    <property type="evidence" value="ECO:0007669"/>
    <property type="project" value="UniProtKB-SubCell"/>
</dbReference>
<dbReference type="GO" id="GO:0008961">
    <property type="term" value="F:phosphatidylglycerol-prolipoprotein diacylglyceryl transferase activity"/>
    <property type="evidence" value="ECO:0007669"/>
    <property type="project" value="UniProtKB-UniRule"/>
</dbReference>
<dbReference type="GO" id="GO:0042158">
    <property type="term" value="P:lipoprotein biosynthetic process"/>
    <property type="evidence" value="ECO:0007669"/>
    <property type="project" value="UniProtKB-UniRule"/>
</dbReference>
<dbReference type="HAMAP" id="MF_01147">
    <property type="entry name" value="Lgt"/>
    <property type="match status" value="1"/>
</dbReference>
<dbReference type="InterPro" id="IPR001640">
    <property type="entry name" value="Lgt"/>
</dbReference>
<dbReference type="NCBIfam" id="TIGR00544">
    <property type="entry name" value="lgt"/>
    <property type="match status" value="1"/>
</dbReference>
<dbReference type="PANTHER" id="PTHR30589:SF0">
    <property type="entry name" value="PHOSPHATIDYLGLYCEROL--PROLIPOPROTEIN DIACYLGLYCERYL TRANSFERASE"/>
    <property type="match status" value="1"/>
</dbReference>
<dbReference type="PANTHER" id="PTHR30589">
    <property type="entry name" value="PROLIPOPROTEIN DIACYLGLYCERYL TRANSFERASE"/>
    <property type="match status" value="1"/>
</dbReference>
<dbReference type="Pfam" id="PF01790">
    <property type="entry name" value="LGT"/>
    <property type="match status" value="1"/>
</dbReference>
<dbReference type="PROSITE" id="PS01311">
    <property type="entry name" value="LGT"/>
    <property type="match status" value="1"/>
</dbReference>
<name>LGT_PROM1</name>
<evidence type="ECO:0000255" key="1">
    <source>
        <dbReference type="HAMAP-Rule" id="MF_01147"/>
    </source>
</evidence>
<feature type="chain" id="PRO_1000053467" description="Phosphatidylglycerol--prolipoprotein diacylglyceryl transferase">
    <location>
        <begin position="1"/>
        <end position="303"/>
    </location>
</feature>
<feature type="transmembrane region" description="Helical" evidence="1">
    <location>
        <begin position="18"/>
        <end position="38"/>
    </location>
</feature>
<feature type="transmembrane region" description="Helical" evidence="1">
    <location>
        <begin position="58"/>
        <end position="78"/>
    </location>
</feature>
<feature type="transmembrane region" description="Helical" evidence="1">
    <location>
        <begin position="106"/>
        <end position="126"/>
    </location>
</feature>
<feature type="transmembrane region" description="Helical" evidence="1">
    <location>
        <begin position="133"/>
        <end position="153"/>
    </location>
</feature>
<feature type="transmembrane region" description="Helical" evidence="1">
    <location>
        <begin position="193"/>
        <end position="213"/>
    </location>
</feature>
<feature type="transmembrane region" description="Helical" evidence="1">
    <location>
        <begin position="223"/>
        <end position="243"/>
    </location>
</feature>
<feature type="transmembrane region" description="Helical" evidence="1">
    <location>
        <begin position="266"/>
        <end position="286"/>
    </location>
</feature>
<feature type="binding site" evidence="1">
    <location>
        <position position="154"/>
    </location>
    <ligand>
        <name>a 1,2-diacyl-sn-glycero-3-phospho-(1'-sn-glycerol)</name>
        <dbReference type="ChEBI" id="CHEBI:64716"/>
    </ligand>
</feature>
<keyword id="KW-0997">Cell inner membrane</keyword>
<keyword id="KW-1003">Cell membrane</keyword>
<keyword id="KW-0472">Membrane</keyword>
<keyword id="KW-0808">Transferase</keyword>
<keyword id="KW-0812">Transmembrane</keyword>
<keyword id="KW-1133">Transmembrane helix</keyword>
<comment type="function">
    <text evidence="1">Catalyzes the transfer of the diacylglyceryl group from phosphatidylglycerol to the sulfhydryl group of the N-terminal cysteine of a prolipoprotein, the first step in the formation of mature lipoproteins.</text>
</comment>
<comment type="catalytic activity">
    <reaction evidence="1">
        <text>L-cysteinyl-[prolipoprotein] + a 1,2-diacyl-sn-glycero-3-phospho-(1'-sn-glycerol) = an S-1,2-diacyl-sn-glyceryl-L-cysteinyl-[prolipoprotein] + sn-glycerol 1-phosphate + H(+)</text>
        <dbReference type="Rhea" id="RHEA:56712"/>
        <dbReference type="Rhea" id="RHEA-COMP:14679"/>
        <dbReference type="Rhea" id="RHEA-COMP:14680"/>
        <dbReference type="ChEBI" id="CHEBI:15378"/>
        <dbReference type="ChEBI" id="CHEBI:29950"/>
        <dbReference type="ChEBI" id="CHEBI:57685"/>
        <dbReference type="ChEBI" id="CHEBI:64716"/>
        <dbReference type="ChEBI" id="CHEBI:140658"/>
        <dbReference type="EC" id="2.5.1.145"/>
    </reaction>
</comment>
<comment type="pathway">
    <text evidence="1">Protein modification; lipoprotein biosynthesis (diacylglyceryl transfer).</text>
</comment>
<comment type="subcellular location">
    <subcellularLocation>
        <location evidence="1">Cell inner membrane</location>
        <topology evidence="1">Multi-pass membrane protein</topology>
    </subcellularLocation>
</comment>
<comment type="similarity">
    <text evidence="1">Belongs to the Lgt family.</text>
</comment>
<reference key="1">
    <citation type="journal article" date="2007" name="PLoS Genet.">
        <title>Patterns and implications of gene gain and loss in the evolution of Prochlorococcus.</title>
        <authorList>
            <person name="Kettler G.C."/>
            <person name="Martiny A.C."/>
            <person name="Huang K."/>
            <person name="Zucker J."/>
            <person name="Coleman M.L."/>
            <person name="Rodrigue S."/>
            <person name="Chen F."/>
            <person name="Lapidus A."/>
            <person name="Ferriera S."/>
            <person name="Johnson J."/>
            <person name="Steglich C."/>
            <person name="Church G.M."/>
            <person name="Richardson P."/>
            <person name="Chisholm S.W."/>
        </authorList>
    </citation>
    <scope>NUCLEOTIDE SEQUENCE [LARGE SCALE GENOMIC DNA]</scope>
    <source>
        <strain>NATL1A</strain>
    </source>
</reference>
<organism>
    <name type="scientific">Prochlorococcus marinus (strain NATL1A)</name>
    <dbReference type="NCBI Taxonomy" id="167555"/>
    <lineage>
        <taxon>Bacteria</taxon>
        <taxon>Bacillati</taxon>
        <taxon>Cyanobacteriota</taxon>
        <taxon>Cyanophyceae</taxon>
        <taxon>Synechococcales</taxon>
        <taxon>Prochlorococcaceae</taxon>
        <taxon>Prochlorococcus</taxon>
    </lineage>
</organism>
<accession>A2C0R7</accession>
<protein>
    <recommendedName>
        <fullName evidence="1">Phosphatidylglycerol--prolipoprotein diacylglyceryl transferase</fullName>
        <ecNumber evidence="1">2.5.1.145</ecNumber>
    </recommendedName>
</protein>
<gene>
    <name evidence="1" type="primary">lgt</name>
    <name type="ordered locus">NATL1_05151</name>
</gene>